<organism>
    <name type="scientific">Synechococcus elongatus (strain ATCC 33912 / PCC 7942 / FACHB-805)</name>
    <name type="common">Anacystis nidulans R2</name>
    <dbReference type="NCBI Taxonomy" id="1140"/>
    <lineage>
        <taxon>Bacteria</taxon>
        <taxon>Bacillati</taxon>
        <taxon>Cyanobacteriota</taxon>
        <taxon>Cyanophyceae</taxon>
        <taxon>Synechococcales</taxon>
        <taxon>Synechococcaceae</taxon>
        <taxon>Synechococcus</taxon>
    </lineage>
</organism>
<accession>Q31LL0</accession>
<gene>
    <name evidence="1" type="primary">pgi</name>
    <name type="ordered locus">Synpcc7942_2029</name>
</gene>
<dbReference type="EC" id="5.3.1.9" evidence="1"/>
<dbReference type="EMBL" id="CP000100">
    <property type="protein sequence ID" value="ABB58059.1"/>
    <property type="molecule type" value="Genomic_DNA"/>
</dbReference>
<dbReference type="RefSeq" id="WP_011244376.1">
    <property type="nucleotide sequence ID" value="NZ_JACJTX010000001.1"/>
</dbReference>
<dbReference type="SMR" id="Q31LL0"/>
<dbReference type="STRING" id="1140.Synpcc7942_2029"/>
<dbReference type="PaxDb" id="1140-Synpcc7942_2029"/>
<dbReference type="KEGG" id="syf:Synpcc7942_2029"/>
<dbReference type="eggNOG" id="COG0166">
    <property type="taxonomic scope" value="Bacteria"/>
</dbReference>
<dbReference type="HOGENOM" id="CLU_033288_0_0_3"/>
<dbReference type="OrthoDB" id="140919at2"/>
<dbReference type="BioCyc" id="SYNEL:SYNPCC7942_2029-MONOMER"/>
<dbReference type="UniPathway" id="UPA00109">
    <property type="reaction ID" value="UER00181"/>
</dbReference>
<dbReference type="UniPathway" id="UPA00138"/>
<dbReference type="Proteomes" id="UP000889800">
    <property type="component" value="Chromosome"/>
</dbReference>
<dbReference type="GO" id="GO:0005829">
    <property type="term" value="C:cytosol"/>
    <property type="evidence" value="ECO:0007669"/>
    <property type="project" value="TreeGrafter"/>
</dbReference>
<dbReference type="GO" id="GO:0097367">
    <property type="term" value="F:carbohydrate derivative binding"/>
    <property type="evidence" value="ECO:0007669"/>
    <property type="project" value="InterPro"/>
</dbReference>
<dbReference type="GO" id="GO:0004347">
    <property type="term" value="F:glucose-6-phosphate isomerase activity"/>
    <property type="evidence" value="ECO:0007669"/>
    <property type="project" value="UniProtKB-UniRule"/>
</dbReference>
<dbReference type="GO" id="GO:0048029">
    <property type="term" value="F:monosaccharide binding"/>
    <property type="evidence" value="ECO:0007669"/>
    <property type="project" value="TreeGrafter"/>
</dbReference>
<dbReference type="GO" id="GO:0006094">
    <property type="term" value="P:gluconeogenesis"/>
    <property type="evidence" value="ECO:0007669"/>
    <property type="project" value="UniProtKB-UniRule"/>
</dbReference>
<dbReference type="GO" id="GO:0051156">
    <property type="term" value="P:glucose 6-phosphate metabolic process"/>
    <property type="evidence" value="ECO:0007669"/>
    <property type="project" value="TreeGrafter"/>
</dbReference>
<dbReference type="GO" id="GO:0006096">
    <property type="term" value="P:glycolytic process"/>
    <property type="evidence" value="ECO:0007669"/>
    <property type="project" value="UniProtKB-UniRule"/>
</dbReference>
<dbReference type="CDD" id="cd05015">
    <property type="entry name" value="SIS_PGI_1"/>
    <property type="match status" value="1"/>
</dbReference>
<dbReference type="CDD" id="cd05016">
    <property type="entry name" value="SIS_PGI_2"/>
    <property type="match status" value="1"/>
</dbReference>
<dbReference type="FunFam" id="3.40.50.10490:FF:000021">
    <property type="entry name" value="Glucose-6-phosphate isomerase"/>
    <property type="match status" value="1"/>
</dbReference>
<dbReference type="FunFam" id="3.40.50.10490:FF:000023">
    <property type="entry name" value="Glucose-6-phosphate isomerase"/>
    <property type="match status" value="1"/>
</dbReference>
<dbReference type="Gene3D" id="3.40.50.10490">
    <property type="entry name" value="Glucose-6-phosphate isomerase like protein, domain 1"/>
    <property type="match status" value="3"/>
</dbReference>
<dbReference type="HAMAP" id="MF_00473">
    <property type="entry name" value="G6P_isomerase"/>
    <property type="match status" value="1"/>
</dbReference>
<dbReference type="InterPro" id="IPR001672">
    <property type="entry name" value="G6P_Isomerase"/>
</dbReference>
<dbReference type="InterPro" id="IPR018189">
    <property type="entry name" value="Phosphoglucose_isomerase_CS"/>
</dbReference>
<dbReference type="InterPro" id="IPR046348">
    <property type="entry name" value="SIS_dom_sf"/>
</dbReference>
<dbReference type="InterPro" id="IPR035476">
    <property type="entry name" value="SIS_PGI_1"/>
</dbReference>
<dbReference type="InterPro" id="IPR035482">
    <property type="entry name" value="SIS_PGI_2"/>
</dbReference>
<dbReference type="NCBIfam" id="NF010696">
    <property type="entry name" value="PRK14096.1"/>
    <property type="match status" value="1"/>
</dbReference>
<dbReference type="PANTHER" id="PTHR11469">
    <property type="entry name" value="GLUCOSE-6-PHOSPHATE ISOMERASE"/>
    <property type="match status" value="1"/>
</dbReference>
<dbReference type="PANTHER" id="PTHR11469:SF1">
    <property type="entry name" value="GLUCOSE-6-PHOSPHATE ISOMERASE"/>
    <property type="match status" value="1"/>
</dbReference>
<dbReference type="Pfam" id="PF00342">
    <property type="entry name" value="PGI"/>
    <property type="match status" value="2"/>
</dbReference>
<dbReference type="PRINTS" id="PR00662">
    <property type="entry name" value="G6PISOMERASE"/>
</dbReference>
<dbReference type="SUPFAM" id="SSF53697">
    <property type="entry name" value="SIS domain"/>
    <property type="match status" value="1"/>
</dbReference>
<dbReference type="PROSITE" id="PS00174">
    <property type="entry name" value="P_GLUCOSE_ISOMERASE_2"/>
    <property type="match status" value="1"/>
</dbReference>
<dbReference type="PROSITE" id="PS51463">
    <property type="entry name" value="P_GLUCOSE_ISOMERASE_3"/>
    <property type="match status" value="1"/>
</dbReference>
<name>G6PI_SYNE7</name>
<protein>
    <recommendedName>
        <fullName evidence="1">Glucose-6-phosphate isomerase</fullName>
        <shortName evidence="1">GPI</shortName>
        <ecNumber evidence="1">5.3.1.9</ecNumber>
    </recommendedName>
    <alternativeName>
        <fullName evidence="1">Phosphoglucose isomerase</fullName>
        <shortName evidence="1">PGI</shortName>
    </alternativeName>
    <alternativeName>
        <fullName evidence="1">Phosphohexose isomerase</fullName>
        <shortName evidence="1">PHI</shortName>
    </alternativeName>
</protein>
<sequence>MTAQQLWQRYLDWLYYDPSLEFYLDISRMGFDDAFVTSMQPKFQHAFAAMAELEAGAIANPDEQRMVGHYWLRDPELAPTPELQTQIRDTLAAIQDFALKVHSGVLRPPTGSRFTDILSIGIGGSALGPQFVSEALRPQAALLQIHFFDNTDPAGFDRVLADLGDRLASTLVIVISKSGGTPETRNGMLEVQSAFAQRGIAFAPQAVAVTGVGSHLDHVAITERWLARFPMEDWVGGRTSELSAVGLLSAALLGIDITAMLAGARQMDALTRHSDLRQNPAALLALSWYWAGNGQGKKDMVILPYKDSLLLFSRYLQQLIMESLGKERDLLGKVVHQGIAVYGNKGSTDQHAYVQQLREGIPNFFATFIEVLEDRQGPSPVVEPGITSGDYLSGLLQGTRAALYENGRESITITVPRVDAQQVGALIALYERAVGLYASLVGINAYHQPGVEAGKKAAAGVLEIQRQIVELLQQGQPLSIAAIADDLGQSEQIETIYKILRHLEANQRGVQLTGDRHNPLSLIASWQR</sequence>
<comment type="function">
    <text evidence="1">Catalyzes the reversible isomerization of glucose-6-phosphate to fructose-6-phosphate.</text>
</comment>
<comment type="catalytic activity">
    <reaction evidence="1">
        <text>alpha-D-glucose 6-phosphate = beta-D-fructose 6-phosphate</text>
        <dbReference type="Rhea" id="RHEA:11816"/>
        <dbReference type="ChEBI" id="CHEBI:57634"/>
        <dbReference type="ChEBI" id="CHEBI:58225"/>
        <dbReference type="EC" id="5.3.1.9"/>
    </reaction>
</comment>
<comment type="pathway">
    <text evidence="1">Carbohydrate biosynthesis; gluconeogenesis.</text>
</comment>
<comment type="pathway">
    <text evidence="1">Carbohydrate degradation; glycolysis; D-glyceraldehyde 3-phosphate and glycerone phosphate from D-glucose: step 2/4.</text>
</comment>
<comment type="subcellular location">
    <subcellularLocation>
        <location evidence="1">Cytoplasm</location>
    </subcellularLocation>
</comment>
<comment type="similarity">
    <text evidence="1">Belongs to the GPI family.</text>
</comment>
<reference key="1">
    <citation type="submission" date="2005-08" db="EMBL/GenBank/DDBJ databases">
        <title>Complete sequence of chromosome 1 of Synechococcus elongatus PCC 7942.</title>
        <authorList>
            <consortium name="US DOE Joint Genome Institute"/>
            <person name="Copeland A."/>
            <person name="Lucas S."/>
            <person name="Lapidus A."/>
            <person name="Barry K."/>
            <person name="Detter J.C."/>
            <person name="Glavina T."/>
            <person name="Hammon N."/>
            <person name="Israni S."/>
            <person name="Pitluck S."/>
            <person name="Schmutz J."/>
            <person name="Larimer F."/>
            <person name="Land M."/>
            <person name="Kyrpides N."/>
            <person name="Lykidis A."/>
            <person name="Golden S."/>
            <person name="Richardson P."/>
        </authorList>
    </citation>
    <scope>NUCLEOTIDE SEQUENCE [LARGE SCALE GENOMIC DNA]</scope>
    <source>
        <strain>ATCC 33912 / PCC 7942 / FACHB-805</strain>
    </source>
</reference>
<keyword id="KW-0963">Cytoplasm</keyword>
<keyword id="KW-0312">Gluconeogenesis</keyword>
<keyword id="KW-0324">Glycolysis</keyword>
<keyword id="KW-0413">Isomerase</keyword>
<keyword id="KW-1185">Reference proteome</keyword>
<feature type="chain" id="PRO_0000252658" description="Glucose-6-phosphate isomerase">
    <location>
        <begin position="1"/>
        <end position="528"/>
    </location>
</feature>
<feature type="active site" description="Proton donor" evidence="1">
    <location>
        <position position="322"/>
    </location>
</feature>
<feature type="active site" evidence="1">
    <location>
        <position position="351"/>
    </location>
</feature>
<feature type="active site" evidence="1">
    <location>
        <position position="455"/>
    </location>
</feature>
<evidence type="ECO:0000255" key="1">
    <source>
        <dbReference type="HAMAP-Rule" id="MF_00473"/>
    </source>
</evidence>
<proteinExistence type="inferred from homology"/>